<dbReference type="EMBL" id="Z48621">
    <property type="protein sequence ID" value="CAA88545.2"/>
    <property type="molecule type" value="Genomic_DNA"/>
</dbReference>
<dbReference type="PIR" id="T23998">
    <property type="entry name" value="T23998"/>
</dbReference>
<dbReference type="RefSeq" id="NP_509656.2">
    <property type="nucleotide sequence ID" value="NM_077255.5"/>
</dbReference>
<dbReference type="FunCoup" id="Q09608">
    <property type="interactions" value="297"/>
</dbReference>
<dbReference type="STRING" id="6239.R07B1.8.1"/>
<dbReference type="PaxDb" id="6239-R07B1.8"/>
<dbReference type="EnsemblMetazoa" id="R07B1.8.1">
    <property type="protein sequence ID" value="R07B1.8.1"/>
    <property type="gene ID" value="WBGene00001608"/>
</dbReference>
<dbReference type="GeneID" id="187649"/>
<dbReference type="KEGG" id="cel:CELE_R07B1.8"/>
<dbReference type="UCSC" id="R07B1.8">
    <property type="organism name" value="c. elegans"/>
</dbReference>
<dbReference type="AGR" id="WB:WBGene00001608"/>
<dbReference type="CTD" id="187649"/>
<dbReference type="WormBase" id="R07B1.8">
    <property type="protein sequence ID" value="CE38626"/>
    <property type="gene ID" value="WBGene00001608"/>
    <property type="gene designation" value="pugs-5"/>
</dbReference>
<dbReference type="eggNOG" id="KOG4423">
    <property type="taxonomic scope" value="Eukaryota"/>
</dbReference>
<dbReference type="HOGENOM" id="CLU_650901_0_0_1"/>
<dbReference type="InParanoid" id="Q09608"/>
<dbReference type="OMA" id="LWGLPQL"/>
<dbReference type="OrthoDB" id="5871443at2759"/>
<dbReference type="PRO" id="PR:Q09608"/>
<dbReference type="Proteomes" id="UP000001940">
    <property type="component" value="Chromosome X"/>
</dbReference>
<dbReference type="Bgee" id="WBGene00001608">
    <property type="expression patterns" value="Expressed in pharyngeal muscle cell (C elegans) and 3 other cell types or tissues"/>
</dbReference>
<keyword id="KW-1185">Reference proteome</keyword>
<proteinExistence type="predicted"/>
<organism>
    <name type="scientific">Caenorhabditis elegans</name>
    <dbReference type="NCBI Taxonomy" id="6239"/>
    <lineage>
        <taxon>Eukaryota</taxon>
        <taxon>Metazoa</taxon>
        <taxon>Ecdysozoa</taxon>
        <taxon>Nematoda</taxon>
        <taxon>Chromadorea</taxon>
        <taxon>Rhabditida</taxon>
        <taxon>Rhabditina</taxon>
        <taxon>Rhabditomorpha</taxon>
        <taxon>Rhabditoidea</taxon>
        <taxon>Rhabditidae</taxon>
        <taxon>Peloderinae</taxon>
        <taxon>Caenorhabditis</taxon>
    </lineage>
</organism>
<reference key="1">
    <citation type="journal article" date="1998" name="Science">
        <title>Genome sequence of the nematode C. elegans: a platform for investigating biology.</title>
        <authorList>
            <consortium name="The C. elegans sequencing consortium"/>
        </authorList>
    </citation>
    <scope>NUCLEOTIDE SEQUENCE [LARGE SCALE GENOMIC DNA]</scope>
    <source>
        <strain>Bristol N2</strain>
    </source>
</reference>
<feature type="chain" id="PRO_0000065422" description="Protein upregulated in glial subsets pugs-5">
    <location>
        <begin position="1"/>
        <end position="425"/>
    </location>
</feature>
<feature type="region of interest" description="Disordered" evidence="1">
    <location>
        <begin position="355"/>
        <end position="407"/>
    </location>
</feature>
<feature type="compositionally biased region" description="Basic and acidic residues" evidence="1">
    <location>
        <begin position="355"/>
        <end position="373"/>
    </location>
</feature>
<accession>Q09608</accession>
<gene>
    <name evidence="2" type="primary">pugs-5</name>
    <name evidence="2" type="ORF">R07B1.8</name>
</gene>
<sequence length="425" mass="48058">MTHLLLLLFFSCVQLTTGQFYCADLIQQCAKSAAEYTEQILQYKESAFKSCVRRPACHTERKIFDECFDASVSATHISPPQESTSNDGETRKVTQPPMVKYNSLLKFFTEKSMNFRSALDQCFVRSPFVPKRNFFGPSILDEDAAYARAIYQFDLADRLWGLPELSVTRPSLDTLGVCRTQNTALRVFGSGISRIARASDPKKNNLTSSCMLDEDEITCYRQALDLNSEYIQLIYNRDYALRACIQNLRQQSVCRMNDKSRLRSCLCGVREQYDNDVQAGILQCVKSKSPHIPAMVIEMSSSLDEEPTSAKIQEQVTPAQLTFDTPGAIVNGQCMCACEHSAKNEATRLFANKKNNNDVEKSTQIEKKPEKQGPEIQEEVVEMETVKDEQPPKTSAVRFKENSPRLMQPSEAAGRVFWMNNITIT</sequence>
<name>YRN8_CAEEL</name>
<protein>
    <recommendedName>
        <fullName evidence="2">Protein upregulated in glial subsets pugs-5</fullName>
    </recommendedName>
</protein>
<evidence type="ECO:0000256" key="1">
    <source>
        <dbReference type="SAM" id="MobiDB-lite"/>
    </source>
</evidence>
<evidence type="ECO:0000312" key="2">
    <source>
        <dbReference type="WormBase" id="R07B1.8"/>
    </source>
</evidence>